<comment type="function">
    <text evidence="1 2 3 4 5 6 8">Endoplasmic reticulum and Golgi ceramidase that catalyzes the hydrolysis of unsaturated long-chain C18:1-, C20:1- and C20:4-ceramides, dihydroceramides and phytoceramides into sphingoid bases like sphingosine and free fatty acids at alkaline pH (PubMed:11356846, PubMed:20068046, PubMed:20207939, PubMed:26792856, PubMed:30575723). Ceramides, sphingosine, and its phosphorylated form sphingosine-1-phosphate are bioactive lipids that mediate cellular signaling pathways regulating several biological processes including cell proliferation, apoptosis and differentiation (PubMed:20068046). Controls the generation of sphingosine in erythrocytes, and thereby sphingosine-1-phosphate in plasma (PubMed:20207939). Through the regulation of ceramides and sphingosine-1-phosphate homeostasis in the brain may play a role in neurons survival and function (By similarity). By regulating the levels of pro-inflammatory ceramides in immune cells and tissues, may modulate the inflammatory response (By similarity).</text>
</comment>
<comment type="catalytic activity">
    <reaction evidence="2 3">
        <text>an N-acyl-(4R)-4-hydroxysphinganine + H2O = (4R)-hydroxysphinganine + a fatty acid</text>
        <dbReference type="Rhea" id="RHEA:33555"/>
        <dbReference type="ChEBI" id="CHEBI:15377"/>
        <dbReference type="ChEBI" id="CHEBI:28868"/>
        <dbReference type="ChEBI" id="CHEBI:31998"/>
        <dbReference type="ChEBI" id="CHEBI:64124"/>
    </reaction>
    <physiologicalReaction direction="left-to-right" evidence="10">
        <dbReference type="Rhea" id="RHEA:33556"/>
    </physiologicalReaction>
</comment>
<comment type="catalytic activity">
    <reaction evidence="3">
        <text>N-(5Z,8Z,11Z,14Z-eicosatetraenoyl)-sphing-4-enine + H2O = sphing-4-enine + (5Z,8Z,11Z,14Z)-eicosatetraenoate</text>
        <dbReference type="Rhea" id="RHEA:45348"/>
        <dbReference type="ChEBI" id="CHEBI:15377"/>
        <dbReference type="ChEBI" id="CHEBI:32395"/>
        <dbReference type="ChEBI" id="CHEBI:57756"/>
        <dbReference type="ChEBI" id="CHEBI:85198"/>
    </reaction>
    <physiologicalReaction direction="left-to-right" evidence="10">
        <dbReference type="Rhea" id="RHEA:45349"/>
    </physiologicalReaction>
</comment>
<comment type="catalytic activity">
    <reaction evidence="3">
        <text>N-(5Z,8Z,11Z,14Z-eicosatetraenoyl)-sphinganine + H2O = sphinganine + (5Z,8Z,11Z,14Z)-eicosatetraenoate</text>
        <dbReference type="Rhea" id="RHEA:45376"/>
        <dbReference type="ChEBI" id="CHEBI:15377"/>
        <dbReference type="ChEBI" id="CHEBI:32395"/>
        <dbReference type="ChEBI" id="CHEBI:57817"/>
        <dbReference type="ChEBI" id="CHEBI:85206"/>
    </reaction>
    <physiologicalReaction direction="left-to-right" evidence="10">
        <dbReference type="Rhea" id="RHEA:45377"/>
    </physiologicalReaction>
</comment>
<comment type="catalytic activity">
    <reaction evidence="3">
        <text>N-(5Z,8Z,11Z,14Z-eicosatetraenoyl)-(4R)-hydroxysphinganine + H2O = (4R)-hydroxysphinganine + (5Z,8Z,11Z,14Z)-eicosatetraenoate</text>
        <dbReference type="Rhea" id="RHEA:45380"/>
        <dbReference type="ChEBI" id="CHEBI:15377"/>
        <dbReference type="ChEBI" id="CHEBI:32395"/>
        <dbReference type="ChEBI" id="CHEBI:64124"/>
        <dbReference type="ChEBI" id="CHEBI:85207"/>
    </reaction>
    <physiologicalReaction direction="left-to-right" evidence="10">
        <dbReference type="Rhea" id="RHEA:45381"/>
    </physiologicalReaction>
</comment>
<comment type="catalytic activity">
    <reaction evidence="3">
        <text>N-(11Z-eicosenoyl)-sphing-4-enine + H2O = (11Z)-eicosenoate + sphing-4-enine</text>
        <dbReference type="Rhea" id="RHEA:45356"/>
        <dbReference type="ChEBI" id="CHEBI:15377"/>
        <dbReference type="ChEBI" id="CHEBI:32426"/>
        <dbReference type="ChEBI" id="CHEBI:57756"/>
        <dbReference type="ChEBI" id="CHEBI:85284"/>
    </reaction>
    <physiologicalReaction direction="left-to-right" evidence="10">
        <dbReference type="Rhea" id="RHEA:45357"/>
    </physiologicalReaction>
</comment>
<comment type="catalytic activity">
    <reaction evidence="3">
        <text>N-(11Z-eicosenoyl)-sphinganine + H2O = (11Z)-eicosenoate + sphinganine</text>
        <dbReference type="Rhea" id="RHEA:45360"/>
        <dbReference type="ChEBI" id="CHEBI:15377"/>
        <dbReference type="ChEBI" id="CHEBI:32426"/>
        <dbReference type="ChEBI" id="CHEBI:57817"/>
        <dbReference type="ChEBI" id="CHEBI:85285"/>
    </reaction>
    <physiologicalReaction direction="left-to-right" evidence="10">
        <dbReference type="Rhea" id="RHEA:45361"/>
    </physiologicalReaction>
</comment>
<comment type="catalytic activity">
    <reaction evidence="3">
        <text>N-(11Z-eicosenoyl)-(4R)-hydroxysphinganine + H2O = (11Z)-eicosenoate + (4R)-hydroxysphinganine</text>
        <dbReference type="Rhea" id="RHEA:45364"/>
        <dbReference type="ChEBI" id="CHEBI:15377"/>
        <dbReference type="ChEBI" id="CHEBI:32426"/>
        <dbReference type="ChEBI" id="CHEBI:64124"/>
        <dbReference type="ChEBI" id="CHEBI:85286"/>
    </reaction>
    <physiologicalReaction direction="left-to-right" evidence="10">
        <dbReference type="Rhea" id="RHEA:45365"/>
    </physiologicalReaction>
</comment>
<comment type="catalytic activity">
    <reaction evidence="3 5">
        <text>N-(9Z-octadecenoyl)-sphing-4-enine + H2O = sphing-4-enine + (9Z)-octadecenoate</text>
        <dbReference type="Rhea" id="RHEA:41299"/>
        <dbReference type="ChEBI" id="CHEBI:15377"/>
        <dbReference type="ChEBI" id="CHEBI:30823"/>
        <dbReference type="ChEBI" id="CHEBI:57756"/>
        <dbReference type="ChEBI" id="CHEBI:77996"/>
    </reaction>
    <physiologicalReaction direction="left-to-right" evidence="10">
        <dbReference type="Rhea" id="RHEA:41300"/>
    </physiologicalReaction>
</comment>
<comment type="catalytic activity">
    <reaction evidence="3 6">
        <text>N-(9Z-octadecenoyl)-sphinganine + H2O = sphinganine + (9Z)-octadecenoate</text>
        <dbReference type="Rhea" id="RHEA:45372"/>
        <dbReference type="ChEBI" id="CHEBI:15377"/>
        <dbReference type="ChEBI" id="CHEBI:30823"/>
        <dbReference type="ChEBI" id="CHEBI:57817"/>
        <dbReference type="ChEBI" id="CHEBI:74100"/>
    </reaction>
    <physiologicalReaction direction="left-to-right" evidence="10">
        <dbReference type="Rhea" id="RHEA:45373"/>
    </physiologicalReaction>
</comment>
<comment type="catalytic activity">
    <reaction evidence="3">
        <text>N-(9Z-octadecenoyl)-(4R)-hydroxysphinganine + H2O = (4R)-hydroxysphinganine + (9Z)-octadecenoate</text>
        <dbReference type="Rhea" id="RHEA:45368"/>
        <dbReference type="ChEBI" id="CHEBI:15377"/>
        <dbReference type="ChEBI" id="CHEBI:30823"/>
        <dbReference type="ChEBI" id="CHEBI:64124"/>
        <dbReference type="ChEBI" id="CHEBI:85204"/>
    </reaction>
    <physiologicalReaction direction="left-to-right" evidence="10">
        <dbReference type="Rhea" id="RHEA:45369"/>
    </physiologicalReaction>
</comment>
<comment type="catalytic activity">
    <reaction evidence="3 4 5">
        <text>an N-acylsphing-4-enine + H2O = sphing-4-enine + a fatty acid</text>
        <dbReference type="Rhea" id="RHEA:20856"/>
        <dbReference type="ChEBI" id="CHEBI:15377"/>
        <dbReference type="ChEBI" id="CHEBI:28868"/>
        <dbReference type="ChEBI" id="CHEBI:52639"/>
        <dbReference type="ChEBI" id="CHEBI:57756"/>
        <dbReference type="EC" id="3.5.1.23"/>
    </reaction>
    <physiologicalReaction direction="left-to-right" evidence="10">
        <dbReference type="Rhea" id="RHEA:20857"/>
    </physiologicalReaction>
</comment>
<comment type="catalytic activity">
    <reaction evidence="3 4">
        <text>an N-acylsphinganine + H2O = sphinganine + a fatty acid</text>
        <dbReference type="Rhea" id="RHEA:33551"/>
        <dbReference type="ChEBI" id="CHEBI:15377"/>
        <dbReference type="ChEBI" id="CHEBI:28868"/>
        <dbReference type="ChEBI" id="CHEBI:31488"/>
        <dbReference type="ChEBI" id="CHEBI:57817"/>
    </reaction>
    <physiologicalReaction direction="left-to-right" evidence="10">
        <dbReference type="Rhea" id="RHEA:33552"/>
    </physiologicalReaction>
</comment>
<comment type="cofactor">
    <cofactor evidence="6">
        <name>Zn(2+)</name>
        <dbReference type="ChEBI" id="CHEBI:29105"/>
    </cofactor>
</comment>
<comment type="activity regulation">
    <text evidence="2">Activated by 5 mM Ca(2+) and inhibited by 5 mM Zn(2+).</text>
</comment>
<comment type="biophysicochemical properties">
    <phDependence>
        <text evidence="2">Optimum pH is 9.5.</text>
    </phDependence>
</comment>
<comment type="pathway">
    <text evidence="3 4 6">Lipid metabolism; sphingolipid metabolism.</text>
</comment>
<comment type="subcellular location">
    <subcellularLocation>
        <location evidence="2">Endoplasmic reticulum membrane</location>
        <topology evidence="2 6">Multi-pass membrane protein</topology>
    </subcellularLocation>
    <subcellularLocation>
        <location evidence="2">Golgi apparatus membrane</location>
        <topology evidence="2 6">Multi-pass membrane protein</topology>
    </subcellularLocation>
</comment>
<comment type="alternative products">
    <event type="alternative splicing"/>
    <isoform>
        <id>Q9NUN7-1</id>
        <name>1</name>
        <sequence type="displayed"/>
    </isoform>
    <isoform>
        <id>Q9NUN7-2</id>
        <name>2</name>
        <sequence type="described" ref="VSP_039162 VSP_039163"/>
    </isoform>
</comment>
<comment type="tissue specificity">
    <text evidence="2 4">Ubiquitously expressed. Highly expressed in placenta (PubMed:11356846). Expressed in erythrocytes (PubMed:20207939).</text>
</comment>
<comment type="disease" evidence="5 6">
    <disease id="DI-05125">
        <name>Leukodystrophy, progressive, early childhood-onset</name>
        <acronym>PLDECO</acronym>
        <description>A form of leukodystrophy, a disorder of myelin production or maintenance affecting the central nervous system. PELCO features include neurological regression between 6 and 13 months of age, truncal hypotonia, appendicular spasticity, dystonia, optic disk pallor, peripheral neuropathy and neurogenic bladder. Brain imaging shows progressive diffuse abnormal white matter signals, cerebral atrophy, and thin corpus callosum. Sural nerve biopsy shows decreased myelination. PLDECO inheritance is autosomal recessive.</description>
        <dbReference type="MIM" id="617762"/>
    </disease>
    <text>The disease is caused by variants affecting the gene represented in this entry.</text>
</comment>
<comment type="similarity">
    <text evidence="9">Belongs to the alkaline ceramidase family.</text>
</comment>
<accession>Q9NUN7</accession>
<accession>B2RC99</accession>
<evidence type="ECO:0000250" key="1">
    <source>
        <dbReference type="UniProtKB" id="Q9D099"/>
    </source>
</evidence>
<evidence type="ECO:0000269" key="2">
    <source>
    </source>
</evidence>
<evidence type="ECO:0000269" key="3">
    <source>
    </source>
</evidence>
<evidence type="ECO:0000269" key="4">
    <source>
    </source>
</evidence>
<evidence type="ECO:0000269" key="5">
    <source>
    </source>
</evidence>
<evidence type="ECO:0000269" key="6">
    <source>
    </source>
</evidence>
<evidence type="ECO:0000303" key="7">
    <source>
    </source>
</evidence>
<evidence type="ECO:0000303" key="8">
    <source>
    </source>
</evidence>
<evidence type="ECO:0000305" key="9"/>
<evidence type="ECO:0000305" key="10">
    <source>
    </source>
</evidence>
<evidence type="ECO:0007744" key="11">
    <source>
        <dbReference type="PDB" id="6G7O"/>
    </source>
</evidence>
<evidence type="ECO:0007829" key="12">
    <source>
        <dbReference type="PDB" id="6YXH"/>
    </source>
</evidence>
<feature type="chain" id="PRO_0000212463" description="Alkaline ceramidase 3">
    <location>
        <begin position="1"/>
        <end position="267"/>
    </location>
</feature>
<feature type="topological domain" description="Cytoplasmic" evidence="6">
    <location>
        <begin position="1"/>
        <end position="33"/>
    </location>
</feature>
<feature type="transmembrane region" description="Helical" evidence="6">
    <location>
        <begin position="34"/>
        <end position="55"/>
    </location>
</feature>
<feature type="topological domain" description="Lumenal" evidence="6">
    <location>
        <begin position="56"/>
        <end position="61"/>
    </location>
</feature>
<feature type="transmembrane region" description="Helical" evidence="6">
    <location>
        <begin position="62"/>
        <end position="82"/>
    </location>
</feature>
<feature type="topological domain" description="Cytoplasmic" evidence="6">
    <location>
        <begin position="83"/>
        <end position="87"/>
    </location>
</feature>
<feature type="transmembrane region" description="Helical" evidence="6">
    <location>
        <begin position="88"/>
        <end position="108"/>
    </location>
</feature>
<feature type="topological domain" description="Lumenal" evidence="6">
    <location>
        <begin position="109"/>
        <end position="118"/>
    </location>
</feature>
<feature type="transmembrane region" description="Helical" evidence="6">
    <location>
        <begin position="119"/>
        <end position="139"/>
    </location>
</feature>
<feature type="topological domain" description="Cytoplasmic" evidence="6">
    <location>
        <begin position="140"/>
        <end position="141"/>
    </location>
</feature>
<feature type="transmembrane region" description="Helical" evidence="6">
    <location>
        <begin position="142"/>
        <end position="162"/>
    </location>
</feature>
<feature type="topological domain" description="Lumenal" evidence="6">
    <location>
        <begin position="163"/>
        <end position="173"/>
    </location>
</feature>
<feature type="transmembrane region" description="Helical" evidence="6">
    <location>
        <begin position="174"/>
        <end position="194"/>
    </location>
</feature>
<feature type="topological domain" description="Cytoplasmic" evidence="6">
    <location>
        <begin position="195"/>
        <end position="215"/>
    </location>
</feature>
<feature type="transmembrane region" description="Helical" evidence="6">
    <location>
        <begin position="216"/>
        <end position="236"/>
    </location>
</feature>
<feature type="topological domain" description="Lumenal" evidence="6">
    <location>
        <begin position="237"/>
        <end position="267"/>
    </location>
</feature>
<feature type="binding site" evidence="6 11">
    <location>
        <position position="19"/>
    </location>
    <ligand>
        <name>Ca(2+)</name>
        <dbReference type="ChEBI" id="CHEBI:29108"/>
    </ligand>
</feature>
<feature type="binding site" evidence="6 11">
    <location>
        <position position="20"/>
    </location>
    <ligand>
        <name>Ca(2+)</name>
        <dbReference type="ChEBI" id="CHEBI:29108"/>
    </ligand>
</feature>
<feature type="binding site" evidence="6 11">
    <location>
        <position position="22"/>
    </location>
    <ligand>
        <name>Ca(2+)</name>
        <dbReference type="ChEBI" id="CHEBI:29108"/>
    </ligand>
</feature>
<feature type="binding site" evidence="6 11">
    <location>
        <position position="24"/>
    </location>
    <ligand>
        <name>Ca(2+)</name>
        <dbReference type="ChEBI" id="CHEBI:29108"/>
    </ligand>
</feature>
<feature type="binding site" evidence="6 11">
    <location>
        <position position="33"/>
    </location>
    <ligand>
        <name>Ca(2+)</name>
        <dbReference type="ChEBI" id="CHEBI:29108"/>
    </ligand>
</feature>
<feature type="binding site" evidence="6 11">
    <location>
        <position position="81"/>
    </location>
    <ligand>
        <name>Zn(2+)</name>
        <dbReference type="ChEBI" id="CHEBI:29105"/>
        <note>catalytic</note>
    </ligand>
</feature>
<feature type="binding site" evidence="6 11">
    <location>
        <position position="217"/>
    </location>
    <ligand>
        <name>Zn(2+)</name>
        <dbReference type="ChEBI" id="CHEBI:29105"/>
        <note>catalytic</note>
    </ligand>
</feature>
<feature type="binding site" evidence="6 11">
    <location>
        <position position="221"/>
    </location>
    <ligand>
        <name>Zn(2+)</name>
        <dbReference type="ChEBI" id="CHEBI:29105"/>
        <note>catalytic</note>
    </ligand>
</feature>
<feature type="splice variant" id="VSP_039162" description="In isoform 2." evidence="7">
    <location>
        <begin position="1"/>
        <end position="133"/>
    </location>
</feature>
<feature type="splice variant" id="VSP_039163" description="In isoform 2." evidence="7">
    <original>TVYLKVKEPIFH</original>
    <variation>MAQSRLIGTSTS</variation>
    <location>
        <begin position="134"/>
        <end position="145"/>
    </location>
</feature>
<feature type="sequence variant" id="VAR_081205" description="In PLDECO; impaired protein stability; strongly decreased enzyme activity; decreased ceramide catabolic process; in fibroblasts of patients homozygous for the mutation; dbSNP:rs1554988032." evidence="5 6">
    <original>E</original>
    <variation>G</variation>
    <location>
        <position position="33"/>
    </location>
</feature>
<feature type="mutagenesis site" description="Mildly decreased enzyme activity." evidence="6">
    <original>D</original>
    <variation>G</variation>
    <location>
        <position position="19"/>
    </location>
</feature>
<feature type="mutagenesis site" description="Strongly decreased enzyme activity." evidence="6">
    <original>E</original>
    <variation>G</variation>
    <location>
        <position position="22"/>
    </location>
</feature>
<feature type="mutagenesis site" description="Strongly decreased enzyme activity." evidence="6">
    <original>N</original>
    <variation>G</variation>
    <location>
        <position position="24"/>
    </location>
</feature>
<feature type="mutagenesis site" description="No effect on enzyme activity." evidence="6">
    <original>S</original>
    <variation>A</variation>
    <location>
        <position position="99"/>
    </location>
</feature>
<feature type="mutagenesis site" description="Decreased enzyme activity." evidence="6">
    <original>Y</original>
    <variation>A</variation>
    <location>
        <position position="149"/>
    </location>
</feature>
<feature type="mutagenesis site" description="No effect on enzyme activity." evidence="6">
    <original>S</original>
    <variation>A</variation>
    <location>
        <position position="228"/>
    </location>
</feature>
<feature type="sequence conflict" description="In Ref. 1; AAK71923, 2; AAL56013, 3; BAG37496, 5; EAW75010 and 6; AAH73853." evidence="9" ref="1 2 3 5 6">
    <original>V</original>
    <variation>I</variation>
    <location>
        <position position="52"/>
    </location>
</feature>
<feature type="strand" evidence="12">
    <location>
        <begin position="32"/>
        <end position="34"/>
    </location>
</feature>
<feature type="helix" evidence="12">
    <location>
        <begin position="35"/>
        <end position="38"/>
    </location>
</feature>
<feature type="helix" evidence="12">
    <location>
        <begin position="39"/>
        <end position="43"/>
    </location>
</feature>
<feature type="helix" evidence="12">
    <location>
        <begin position="45"/>
        <end position="56"/>
    </location>
</feature>
<feature type="helix" evidence="12">
    <location>
        <begin position="61"/>
        <end position="83"/>
    </location>
</feature>
<feature type="helix" evidence="12">
    <location>
        <begin position="86"/>
        <end position="109"/>
    </location>
</feature>
<feature type="helix" evidence="12">
    <location>
        <begin position="119"/>
        <end position="138"/>
    </location>
</feature>
<feature type="helix" evidence="12">
    <location>
        <begin position="142"/>
        <end position="166"/>
    </location>
</feature>
<feature type="helix" evidence="12">
    <location>
        <begin position="169"/>
        <end position="171"/>
    </location>
</feature>
<feature type="helix" evidence="12">
    <location>
        <begin position="172"/>
        <end position="194"/>
    </location>
</feature>
<feature type="helix" evidence="12">
    <location>
        <begin position="199"/>
        <end position="203"/>
    </location>
</feature>
<feature type="helix" evidence="12">
    <location>
        <begin position="209"/>
        <end position="212"/>
    </location>
</feature>
<feature type="helix" evidence="12">
    <location>
        <begin position="216"/>
        <end position="243"/>
    </location>
</feature>
<dbReference type="EC" id="3.5.1.-" evidence="2 3 4"/>
<dbReference type="EC" id="3.5.1.23" evidence="3 4 5 6"/>
<dbReference type="EMBL" id="AF214454">
    <property type="protein sequence ID" value="AAK71923.1"/>
    <property type="molecule type" value="mRNA"/>
</dbReference>
<dbReference type="EMBL" id="AF327353">
    <property type="protein sequence ID" value="AAL56013.1"/>
    <property type="molecule type" value="mRNA"/>
</dbReference>
<dbReference type="EMBL" id="AK002100">
    <property type="protein sequence ID" value="BAA92085.1"/>
    <property type="molecule type" value="mRNA"/>
</dbReference>
<dbReference type="EMBL" id="AK315000">
    <property type="protein sequence ID" value="BAG37496.1"/>
    <property type="molecule type" value="mRNA"/>
</dbReference>
<dbReference type="EMBL" id="AP000752">
    <property type="status" value="NOT_ANNOTATED_CDS"/>
    <property type="molecule type" value="Genomic_DNA"/>
</dbReference>
<dbReference type="EMBL" id="AP002498">
    <property type="status" value="NOT_ANNOTATED_CDS"/>
    <property type="molecule type" value="Genomic_DNA"/>
</dbReference>
<dbReference type="EMBL" id="AP003119">
    <property type="status" value="NOT_ANNOTATED_CDS"/>
    <property type="molecule type" value="Genomic_DNA"/>
</dbReference>
<dbReference type="EMBL" id="CH471076">
    <property type="protein sequence ID" value="EAW75010.1"/>
    <property type="molecule type" value="Genomic_DNA"/>
</dbReference>
<dbReference type="EMBL" id="BC073853">
    <property type="protein sequence ID" value="AAH73853.1"/>
    <property type="molecule type" value="mRNA"/>
</dbReference>
<dbReference type="CCDS" id="CCDS8247.1">
    <molecule id="Q9NUN7-1"/>
</dbReference>
<dbReference type="RefSeq" id="NP_060837.3">
    <molecule id="Q9NUN7-1"/>
    <property type="nucleotide sequence ID" value="NM_018367.6"/>
</dbReference>
<dbReference type="PDB" id="6G7O">
    <property type="method" value="X-ray"/>
    <property type="resolution" value="2.70 A"/>
    <property type="chains" value="A=2-244"/>
</dbReference>
<dbReference type="PDB" id="6YXH">
    <property type="method" value="X-ray"/>
    <property type="resolution" value="2.60 A"/>
    <property type="chains" value="A=2-244"/>
</dbReference>
<dbReference type="PDBsum" id="6G7O"/>
<dbReference type="PDBsum" id="6YXH"/>
<dbReference type="SMR" id="Q9NUN7"/>
<dbReference type="BioGRID" id="120612">
    <property type="interactions" value="10"/>
</dbReference>
<dbReference type="FunCoup" id="Q9NUN7">
    <property type="interactions" value="1008"/>
</dbReference>
<dbReference type="IntAct" id="Q9NUN7">
    <property type="interactions" value="7"/>
</dbReference>
<dbReference type="STRING" id="9606.ENSP00000434480"/>
<dbReference type="SwissLipids" id="SLP:000000680"/>
<dbReference type="GlyGen" id="Q9NUN7">
    <property type="glycosylation" value="1 site"/>
</dbReference>
<dbReference type="iPTMnet" id="Q9NUN7"/>
<dbReference type="PhosphoSitePlus" id="Q9NUN7"/>
<dbReference type="BioMuta" id="ACER3"/>
<dbReference type="DMDM" id="296439452"/>
<dbReference type="MassIVE" id="Q9NUN7"/>
<dbReference type="PaxDb" id="9606-ENSP00000434480"/>
<dbReference type="PeptideAtlas" id="Q9NUN7"/>
<dbReference type="ProteomicsDB" id="82700">
    <molecule id="Q9NUN7-1"/>
</dbReference>
<dbReference type="ProteomicsDB" id="82701">
    <molecule id="Q9NUN7-2"/>
</dbReference>
<dbReference type="TopDownProteomics" id="Q9NUN7-1">
    <molecule id="Q9NUN7-1"/>
</dbReference>
<dbReference type="Antibodypedia" id="53464">
    <property type="antibodies" value="121 antibodies from 25 providers"/>
</dbReference>
<dbReference type="DNASU" id="55331"/>
<dbReference type="Ensembl" id="ENST00000532485.6">
    <molecule id="Q9NUN7-1"/>
    <property type="protein sequence ID" value="ENSP00000434480.1"/>
    <property type="gene ID" value="ENSG00000078124.13"/>
</dbReference>
<dbReference type="GeneID" id="55331"/>
<dbReference type="KEGG" id="hsa:55331"/>
<dbReference type="MANE-Select" id="ENST00000532485.6">
    <property type="protein sequence ID" value="ENSP00000434480.1"/>
    <property type="RefSeq nucleotide sequence ID" value="NM_018367.7"/>
    <property type="RefSeq protein sequence ID" value="NP_060837.3"/>
</dbReference>
<dbReference type="UCSC" id="uc009yum.2">
    <molecule id="Q9NUN7-1"/>
    <property type="organism name" value="human"/>
</dbReference>
<dbReference type="AGR" id="HGNC:16066"/>
<dbReference type="CTD" id="55331"/>
<dbReference type="DisGeNET" id="55331"/>
<dbReference type="GeneCards" id="ACER3"/>
<dbReference type="HGNC" id="HGNC:16066">
    <property type="gene designation" value="ACER3"/>
</dbReference>
<dbReference type="HPA" id="ENSG00000078124">
    <property type="expression patterns" value="Low tissue specificity"/>
</dbReference>
<dbReference type="MalaCards" id="ACER3"/>
<dbReference type="MIM" id="617036">
    <property type="type" value="gene"/>
</dbReference>
<dbReference type="MIM" id="617762">
    <property type="type" value="phenotype"/>
</dbReference>
<dbReference type="neXtProt" id="NX_Q9NUN7"/>
<dbReference type="OpenTargets" id="ENSG00000078124"/>
<dbReference type="Orphanet" id="502444">
    <property type="disease" value="Alkaline ceramidase 3 deficiency"/>
</dbReference>
<dbReference type="PharmGKB" id="PA33256"/>
<dbReference type="VEuPathDB" id="HostDB:ENSG00000078124"/>
<dbReference type="eggNOG" id="KOG2329">
    <property type="taxonomic scope" value="Eukaryota"/>
</dbReference>
<dbReference type="GeneTree" id="ENSGT00730000110920"/>
<dbReference type="InParanoid" id="Q9NUN7"/>
<dbReference type="OMA" id="IMFEPLR"/>
<dbReference type="OrthoDB" id="187171at2759"/>
<dbReference type="PAN-GO" id="Q9NUN7">
    <property type="GO annotations" value="3 GO annotations based on evolutionary models"/>
</dbReference>
<dbReference type="PhylomeDB" id="Q9NUN7"/>
<dbReference type="TreeFam" id="TF313019"/>
<dbReference type="BRENDA" id="3.5.1.23">
    <property type="organism ID" value="2681"/>
</dbReference>
<dbReference type="PathwayCommons" id="Q9NUN7"/>
<dbReference type="Reactome" id="R-HSA-9845614">
    <property type="pathway name" value="Sphingolipid catabolism"/>
</dbReference>
<dbReference type="SignaLink" id="Q9NUN7"/>
<dbReference type="UniPathway" id="UPA00222"/>
<dbReference type="BioGRID-ORCS" id="55331">
    <property type="hits" value="15 hits in 1156 CRISPR screens"/>
</dbReference>
<dbReference type="ChiTaRS" id="ACER3">
    <property type="organism name" value="human"/>
</dbReference>
<dbReference type="GeneWiki" id="ACER3"/>
<dbReference type="GenomeRNAi" id="55331"/>
<dbReference type="Pharos" id="Q9NUN7">
    <property type="development level" value="Tbio"/>
</dbReference>
<dbReference type="PRO" id="PR:Q9NUN7"/>
<dbReference type="Proteomes" id="UP000005640">
    <property type="component" value="Chromosome 11"/>
</dbReference>
<dbReference type="RNAct" id="Q9NUN7">
    <property type="molecule type" value="protein"/>
</dbReference>
<dbReference type="Bgee" id="ENSG00000078124">
    <property type="expression patterns" value="Expressed in endothelial cell and 195 other cell types or tissues"/>
</dbReference>
<dbReference type="ExpressionAtlas" id="Q9NUN7">
    <property type="expression patterns" value="baseline and differential"/>
</dbReference>
<dbReference type="GO" id="GO:0005789">
    <property type="term" value="C:endoplasmic reticulum membrane"/>
    <property type="evidence" value="ECO:0000314"/>
    <property type="project" value="UniProtKB"/>
</dbReference>
<dbReference type="GO" id="GO:0000139">
    <property type="term" value="C:Golgi membrane"/>
    <property type="evidence" value="ECO:0000314"/>
    <property type="project" value="UniProtKB"/>
</dbReference>
<dbReference type="GO" id="GO:0016020">
    <property type="term" value="C:membrane"/>
    <property type="evidence" value="ECO:0000314"/>
    <property type="project" value="UniProtKB"/>
</dbReference>
<dbReference type="GO" id="GO:0005509">
    <property type="term" value="F:calcium ion binding"/>
    <property type="evidence" value="ECO:0000314"/>
    <property type="project" value="UniProtKB"/>
</dbReference>
<dbReference type="GO" id="GO:0017040">
    <property type="term" value="F:N-acylsphingosine amidohydrolase activity"/>
    <property type="evidence" value="ECO:0000314"/>
    <property type="project" value="UniProtKB"/>
</dbReference>
<dbReference type="GO" id="GO:0008270">
    <property type="term" value="F:zinc ion binding"/>
    <property type="evidence" value="ECO:0000314"/>
    <property type="project" value="UniProtKB"/>
</dbReference>
<dbReference type="GO" id="GO:0046514">
    <property type="term" value="P:ceramide catabolic process"/>
    <property type="evidence" value="ECO:0000314"/>
    <property type="project" value="UniProtKB"/>
</dbReference>
<dbReference type="GO" id="GO:0006954">
    <property type="term" value="P:inflammatory response"/>
    <property type="evidence" value="ECO:0007669"/>
    <property type="project" value="Ensembl"/>
</dbReference>
<dbReference type="GO" id="GO:0042552">
    <property type="term" value="P:myelination"/>
    <property type="evidence" value="ECO:0000315"/>
    <property type="project" value="UniProtKB"/>
</dbReference>
<dbReference type="GO" id="GO:0071602">
    <property type="term" value="P:phytosphingosine biosynthetic process"/>
    <property type="evidence" value="ECO:0000314"/>
    <property type="project" value="UniProtKB"/>
</dbReference>
<dbReference type="GO" id="GO:0008284">
    <property type="term" value="P:positive regulation of cell population proliferation"/>
    <property type="evidence" value="ECO:0000315"/>
    <property type="project" value="UniProtKB"/>
</dbReference>
<dbReference type="GO" id="GO:0043067">
    <property type="term" value="P:regulation of programmed cell death"/>
    <property type="evidence" value="ECO:0000314"/>
    <property type="project" value="UniProtKB"/>
</dbReference>
<dbReference type="GO" id="GO:0046512">
    <property type="term" value="P:sphingosine biosynthetic process"/>
    <property type="evidence" value="ECO:0000314"/>
    <property type="project" value="UniProtKB"/>
</dbReference>
<dbReference type="InterPro" id="IPR008901">
    <property type="entry name" value="ACER"/>
</dbReference>
<dbReference type="PANTHER" id="PTHR46187">
    <property type="entry name" value="ALKALINE CERAMIDASE 3"/>
    <property type="match status" value="1"/>
</dbReference>
<dbReference type="PANTHER" id="PTHR46187:SF3">
    <property type="entry name" value="ALKALINE CERAMIDASE 3"/>
    <property type="match status" value="1"/>
</dbReference>
<dbReference type="Pfam" id="PF05875">
    <property type="entry name" value="Ceramidase"/>
    <property type="match status" value="1"/>
</dbReference>
<sequence>MAPAADREGYWGPTTSTLDWCEENYSVTWYIAEFWNTVSNLIMIIPPMFGAVQSVRDGLEKRYIASYLALTVVGMGSWCFHMTLKYEMQLLDELPMIYSCCIFVYCMFECFKIKNSVNYHLLFTLVLFSLIVTTVYLKVKEPIFHQVMYGMLVFTLVLRSIYIVTWVYPWLRGLGYTSLGIFLLGFLFWNIDNIFCESLRNFRKKVPPIIGITTQFHAWWHILTGLGSYLHILFSLYTRTLYLRYRPKVKFLFGIWPVILFEPLRKH</sequence>
<gene>
    <name type="primary">ACER3</name>
    <name type="synonym">APHC</name>
    <name type="synonym">PHCA</name>
</gene>
<proteinExistence type="evidence at protein level"/>
<organism>
    <name type="scientific">Homo sapiens</name>
    <name type="common">Human</name>
    <dbReference type="NCBI Taxonomy" id="9606"/>
    <lineage>
        <taxon>Eukaryota</taxon>
        <taxon>Metazoa</taxon>
        <taxon>Chordata</taxon>
        <taxon>Craniata</taxon>
        <taxon>Vertebrata</taxon>
        <taxon>Euteleostomi</taxon>
        <taxon>Mammalia</taxon>
        <taxon>Eutheria</taxon>
        <taxon>Euarchontoglires</taxon>
        <taxon>Primates</taxon>
        <taxon>Haplorrhini</taxon>
        <taxon>Catarrhini</taxon>
        <taxon>Hominidae</taxon>
        <taxon>Homo</taxon>
    </lineage>
</organism>
<keyword id="KW-0002">3D-structure</keyword>
<keyword id="KW-0025">Alternative splicing</keyword>
<keyword id="KW-0106">Calcium</keyword>
<keyword id="KW-0225">Disease variant</keyword>
<keyword id="KW-0256">Endoplasmic reticulum</keyword>
<keyword id="KW-0333">Golgi apparatus</keyword>
<keyword id="KW-0378">Hydrolase</keyword>
<keyword id="KW-1026">Leukodystrophy</keyword>
<keyword id="KW-0443">Lipid metabolism</keyword>
<keyword id="KW-0472">Membrane</keyword>
<keyword id="KW-0479">Metal-binding</keyword>
<keyword id="KW-1267">Proteomics identification</keyword>
<keyword id="KW-1185">Reference proteome</keyword>
<keyword id="KW-0746">Sphingolipid metabolism</keyword>
<keyword id="KW-0812">Transmembrane</keyword>
<keyword id="KW-1133">Transmembrane helix</keyword>
<keyword id="KW-0862">Zinc</keyword>
<reference key="1">
    <citation type="journal article" date="2001" name="J. Biol. Chem.">
        <title>Cloning and characterization of a novel human alkaline ceramidase. A mammalian enzyme that hydrolyzes phytoceramide.</title>
        <authorList>
            <person name="Mao C."/>
            <person name="Xu R."/>
            <person name="Szulc Z.M."/>
            <person name="Bielawska A."/>
            <person name="Galadari S.H."/>
            <person name="Obeid L.M."/>
        </authorList>
    </citation>
    <scope>NUCLEOTIDE SEQUENCE [MRNA] (ISOFORM 1)</scope>
    <scope>FUNCTION</scope>
    <scope>CATALYTIC ACTIVITY</scope>
    <scope>ACTIVITY REGULATION</scope>
    <scope>BIOPHYSICOCHEMICAL PROPERTIES</scope>
    <scope>SUBCELLULAR LOCATION</scope>
    <scope>TISSUE SPECIFICITY</scope>
    <source>
        <tissue>Kidney</tissue>
    </source>
</reference>
<reference key="2">
    <citation type="submission" date="2000-12" db="EMBL/GenBank/DDBJ databases">
        <authorList>
            <person name="Li N."/>
            <person name="Zhang W."/>
            <person name="Wan T."/>
            <person name="Chen T."/>
            <person name="Cao X."/>
        </authorList>
    </citation>
    <scope>NUCLEOTIDE SEQUENCE [MRNA] (ISOFORM 1)</scope>
</reference>
<reference key="3">
    <citation type="journal article" date="2004" name="Nat. Genet.">
        <title>Complete sequencing and characterization of 21,243 full-length human cDNAs.</title>
        <authorList>
            <person name="Ota T."/>
            <person name="Suzuki Y."/>
            <person name="Nishikawa T."/>
            <person name="Otsuki T."/>
            <person name="Sugiyama T."/>
            <person name="Irie R."/>
            <person name="Wakamatsu A."/>
            <person name="Hayashi K."/>
            <person name="Sato H."/>
            <person name="Nagai K."/>
            <person name="Kimura K."/>
            <person name="Makita H."/>
            <person name="Sekine M."/>
            <person name="Obayashi M."/>
            <person name="Nishi T."/>
            <person name="Shibahara T."/>
            <person name="Tanaka T."/>
            <person name="Ishii S."/>
            <person name="Yamamoto J."/>
            <person name="Saito K."/>
            <person name="Kawai Y."/>
            <person name="Isono Y."/>
            <person name="Nakamura Y."/>
            <person name="Nagahari K."/>
            <person name="Murakami K."/>
            <person name="Yasuda T."/>
            <person name="Iwayanagi T."/>
            <person name="Wagatsuma M."/>
            <person name="Shiratori A."/>
            <person name="Sudo H."/>
            <person name="Hosoiri T."/>
            <person name="Kaku Y."/>
            <person name="Kodaira H."/>
            <person name="Kondo H."/>
            <person name="Sugawara M."/>
            <person name="Takahashi M."/>
            <person name="Kanda K."/>
            <person name="Yokoi T."/>
            <person name="Furuya T."/>
            <person name="Kikkawa E."/>
            <person name="Omura Y."/>
            <person name="Abe K."/>
            <person name="Kamihara K."/>
            <person name="Katsuta N."/>
            <person name="Sato K."/>
            <person name="Tanikawa M."/>
            <person name="Yamazaki M."/>
            <person name="Ninomiya K."/>
            <person name="Ishibashi T."/>
            <person name="Yamashita H."/>
            <person name="Murakawa K."/>
            <person name="Fujimori K."/>
            <person name="Tanai H."/>
            <person name="Kimata M."/>
            <person name="Watanabe M."/>
            <person name="Hiraoka S."/>
            <person name="Chiba Y."/>
            <person name="Ishida S."/>
            <person name="Ono Y."/>
            <person name="Takiguchi S."/>
            <person name="Watanabe S."/>
            <person name="Yosida M."/>
            <person name="Hotuta T."/>
            <person name="Kusano J."/>
            <person name="Kanehori K."/>
            <person name="Takahashi-Fujii A."/>
            <person name="Hara H."/>
            <person name="Tanase T.-O."/>
            <person name="Nomura Y."/>
            <person name="Togiya S."/>
            <person name="Komai F."/>
            <person name="Hara R."/>
            <person name="Takeuchi K."/>
            <person name="Arita M."/>
            <person name="Imose N."/>
            <person name="Musashino K."/>
            <person name="Yuuki H."/>
            <person name="Oshima A."/>
            <person name="Sasaki N."/>
            <person name="Aotsuka S."/>
            <person name="Yoshikawa Y."/>
            <person name="Matsunawa H."/>
            <person name="Ichihara T."/>
            <person name="Shiohata N."/>
            <person name="Sano S."/>
            <person name="Moriya S."/>
            <person name="Momiyama H."/>
            <person name="Satoh N."/>
            <person name="Takami S."/>
            <person name="Terashima Y."/>
            <person name="Suzuki O."/>
            <person name="Nakagawa S."/>
            <person name="Senoh A."/>
            <person name="Mizoguchi H."/>
            <person name="Goto Y."/>
            <person name="Shimizu F."/>
            <person name="Wakebe H."/>
            <person name="Hishigaki H."/>
            <person name="Watanabe T."/>
            <person name="Sugiyama A."/>
            <person name="Takemoto M."/>
            <person name="Kawakami B."/>
            <person name="Yamazaki M."/>
            <person name="Watanabe K."/>
            <person name="Kumagai A."/>
            <person name="Itakura S."/>
            <person name="Fukuzumi Y."/>
            <person name="Fujimori Y."/>
            <person name="Komiyama M."/>
            <person name="Tashiro H."/>
            <person name="Tanigami A."/>
            <person name="Fujiwara T."/>
            <person name="Ono T."/>
            <person name="Yamada K."/>
            <person name="Fujii Y."/>
            <person name="Ozaki K."/>
            <person name="Hirao M."/>
            <person name="Ohmori Y."/>
            <person name="Kawabata A."/>
            <person name="Hikiji T."/>
            <person name="Kobatake N."/>
            <person name="Inagaki H."/>
            <person name="Ikema Y."/>
            <person name="Okamoto S."/>
            <person name="Okitani R."/>
            <person name="Kawakami T."/>
            <person name="Noguchi S."/>
            <person name="Itoh T."/>
            <person name="Shigeta K."/>
            <person name="Senba T."/>
            <person name="Matsumura K."/>
            <person name="Nakajima Y."/>
            <person name="Mizuno T."/>
            <person name="Morinaga M."/>
            <person name="Sasaki M."/>
            <person name="Togashi T."/>
            <person name="Oyama M."/>
            <person name="Hata H."/>
            <person name="Watanabe M."/>
            <person name="Komatsu T."/>
            <person name="Mizushima-Sugano J."/>
            <person name="Satoh T."/>
            <person name="Shirai Y."/>
            <person name="Takahashi Y."/>
            <person name="Nakagawa K."/>
            <person name="Okumura K."/>
            <person name="Nagase T."/>
            <person name="Nomura N."/>
            <person name="Kikuchi H."/>
            <person name="Masuho Y."/>
            <person name="Yamashita R."/>
            <person name="Nakai K."/>
            <person name="Yada T."/>
            <person name="Nakamura Y."/>
            <person name="Ohara O."/>
            <person name="Isogai T."/>
            <person name="Sugano S."/>
        </authorList>
    </citation>
    <scope>NUCLEOTIDE SEQUENCE [LARGE SCALE MRNA] (ISOFORMS 1 AND 2)</scope>
    <source>
        <tissue>Placenta</tissue>
        <tissue>Thalamus</tissue>
    </source>
</reference>
<reference key="4">
    <citation type="journal article" date="2006" name="Nature">
        <title>Human chromosome 11 DNA sequence and analysis including novel gene identification.</title>
        <authorList>
            <person name="Taylor T.D."/>
            <person name="Noguchi H."/>
            <person name="Totoki Y."/>
            <person name="Toyoda A."/>
            <person name="Kuroki Y."/>
            <person name="Dewar K."/>
            <person name="Lloyd C."/>
            <person name="Itoh T."/>
            <person name="Takeda T."/>
            <person name="Kim D.-W."/>
            <person name="She X."/>
            <person name="Barlow K.F."/>
            <person name="Bloom T."/>
            <person name="Bruford E."/>
            <person name="Chang J.L."/>
            <person name="Cuomo C.A."/>
            <person name="Eichler E."/>
            <person name="FitzGerald M.G."/>
            <person name="Jaffe D.B."/>
            <person name="LaButti K."/>
            <person name="Nicol R."/>
            <person name="Park H.-S."/>
            <person name="Seaman C."/>
            <person name="Sougnez C."/>
            <person name="Yang X."/>
            <person name="Zimmer A.R."/>
            <person name="Zody M.C."/>
            <person name="Birren B.W."/>
            <person name="Nusbaum C."/>
            <person name="Fujiyama A."/>
            <person name="Hattori M."/>
            <person name="Rogers J."/>
            <person name="Lander E.S."/>
            <person name="Sakaki Y."/>
        </authorList>
    </citation>
    <scope>NUCLEOTIDE SEQUENCE [LARGE SCALE GENOMIC DNA]</scope>
</reference>
<reference key="5">
    <citation type="submission" date="2005-07" db="EMBL/GenBank/DDBJ databases">
        <authorList>
            <person name="Mural R.J."/>
            <person name="Istrail S."/>
            <person name="Sutton G.G."/>
            <person name="Florea L."/>
            <person name="Halpern A.L."/>
            <person name="Mobarry C.M."/>
            <person name="Lippert R."/>
            <person name="Walenz B."/>
            <person name="Shatkay H."/>
            <person name="Dew I."/>
            <person name="Miller J.R."/>
            <person name="Flanigan M.J."/>
            <person name="Edwards N.J."/>
            <person name="Bolanos R."/>
            <person name="Fasulo D."/>
            <person name="Halldorsson B.V."/>
            <person name="Hannenhalli S."/>
            <person name="Turner R."/>
            <person name="Yooseph S."/>
            <person name="Lu F."/>
            <person name="Nusskern D.R."/>
            <person name="Shue B.C."/>
            <person name="Zheng X.H."/>
            <person name="Zhong F."/>
            <person name="Delcher A.L."/>
            <person name="Huson D.H."/>
            <person name="Kravitz S.A."/>
            <person name="Mouchard L."/>
            <person name="Reinert K."/>
            <person name="Remington K.A."/>
            <person name="Clark A.G."/>
            <person name="Waterman M.S."/>
            <person name="Eichler E.E."/>
            <person name="Adams M.D."/>
            <person name="Hunkapiller M.W."/>
            <person name="Myers E.W."/>
            <person name="Venter J.C."/>
        </authorList>
    </citation>
    <scope>NUCLEOTIDE SEQUENCE [LARGE SCALE GENOMIC DNA]</scope>
</reference>
<reference key="6">
    <citation type="journal article" date="2004" name="Genome Res.">
        <title>The status, quality, and expansion of the NIH full-length cDNA project: the Mammalian Gene Collection (MGC).</title>
        <authorList>
            <consortium name="The MGC Project Team"/>
        </authorList>
    </citation>
    <scope>NUCLEOTIDE SEQUENCE [LARGE SCALE MRNA] (ISOFORM 1)</scope>
    <source>
        <tissue>Eye</tissue>
    </source>
</reference>
<reference key="7">
    <citation type="journal article" date="2010" name="FASEB J.">
        <title>Role of alkaline ceramidases in the generation of sphingosine and its phosphate in erythrocytes.</title>
        <authorList>
            <person name="Xu R."/>
            <person name="Sun W."/>
            <person name="Jin J."/>
            <person name="Obeid L.M."/>
            <person name="Mao C."/>
        </authorList>
    </citation>
    <scope>FUNCTION</scope>
    <scope>CATALYTIC ACTIVITY</scope>
    <scope>PATHWAY</scope>
    <scope>TISSUE SPECIFICITY</scope>
</reference>
<reference key="8">
    <citation type="journal article" date="2010" name="J. Biol. Chem.">
        <title>Alkaline ceramidase 3 (ACER3) hydrolyzes unsaturated long-chain ceramides, and its down-regulation inhibits both cell proliferation and apoptosis.</title>
        <authorList>
            <person name="Hu W."/>
            <person name="Xu R."/>
            <person name="Sun W."/>
            <person name="Szulc Z.M."/>
            <person name="Bielawski J."/>
            <person name="Obeid L.M."/>
            <person name="Mao C."/>
        </authorList>
    </citation>
    <scope>FUNCTION</scope>
    <scope>CATALYTIC ACTIVITY</scope>
    <scope>SUBSTRATE SPECIFICITY</scope>
    <scope>PATHWAY</scope>
</reference>
<reference key="9">
    <citation type="journal article" date="2016" name="J. Med. Genet.">
        <title>Deficiency of the alkaline ceramidase ACER3 manifests in early childhood by progressive leukodystrophy.</title>
        <authorList>
            <person name="Edvardson S."/>
            <person name="Yi J.K."/>
            <person name="Jalas C."/>
            <person name="Xu R."/>
            <person name="Webb B.D."/>
            <person name="Snider J."/>
            <person name="Fedick A."/>
            <person name="Kleinman E."/>
            <person name="Treff N.R."/>
            <person name="Mao C."/>
            <person name="Elpeleg O."/>
        </authorList>
    </citation>
    <scope>FUNCTION</scope>
    <scope>CATALYTIC ACTIVITY</scope>
    <scope>INVOLVEMENT IN PLDECO</scope>
    <scope>VARIANT PLDECO GLY-33</scope>
    <scope>CHARACTERIZATION OF VARIANT PLDECO GLY-33</scope>
</reference>
<reference key="10">
    <citation type="journal article" date="2018" name="Nat. Commun.">
        <title>Structure of a human intramembrane ceramidase explains enzymatic dysfunction found in leukodystrophy.</title>
        <authorList>
            <person name="Vasiliauskaite-Brooks I."/>
            <person name="Healey R.D."/>
            <person name="Rochaix P."/>
            <person name="Saint-Paul J."/>
            <person name="Sounier R."/>
            <person name="Grison C."/>
            <person name="Waltrich-Augusto T."/>
            <person name="Fortier M."/>
            <person name="Hoh F."/>
            <person name="Saied E.M."/>
            <person name="Arenz C."/>
            <person name="Basu S."/>
            <person name="Leyrat C."/>
            <person name="Granier S."/>
        </authorList>
    </citation>
    <scope>X-RAY CRYSTALLOGRAPHY (2.70 ANGSTROMS) OF 2-244 IN COMPLEX WITH CALCIUM AND ZINC IONS</scope>
    <scope>FUNCTION</scope>
    <scope>CATALYTIC ACTIVITY</scope>
    <scope>COFACTOR</scope>
    <scope>PATHWAY</scope>
    <scope>CHARACTERIZATION OF VARIANT PLDECO GLY-33</scope>
    <scope>SUBCELLULAR LOCATION</scope>
    <scope>TOPOLOGY</scope>
    <scope>MUTAGENESIS OF ASP-19; GLU-22; ASN-24; SER-99; TYR-149 AND SER-228</scope>
</reference>
<name>ACER3_HUMAN</name>
<protein>
    <recommendedName>
        <fullName>Alkaline ceramidase 3</fullName>
        <shortName>AlkCDase 3</shortName>
        <shortName>Alkaline CDase 3</shortName>
        <ecNumber evidence="2 3 4">3.5.1.-</ecNumber>
        <ecNumber evidence="3 4 5 6">3.5.1.23</ecNumber>
    </recommendedName>
    <alternativeName>
        <fullName>Alkaline dihydroceramidase SB89</fullName>
    </alternativeName>
    <alternativeName>
        <fullName>Alkaline phytoceramidase</fullName>
        <shortName>aPHC</shortName>
    </alternativeName>
</protein>